<protein>
    <recommendedName>
        <fullName evidence="1">Large ribosomal subunit protein uL3</fullName>
    </recommendedName>
    <alternativeName>
        <fullName evidence="2">50S ribosomal protein L3</fullName>
    </alternativeName>
</protein>
<feature type="chain" id="PRO_1000141861" description="Large ribosomal subunit protein uL3">
    <location>
        <begin position="1"/>
        <end position="209"/>
    </location>
</feature>
<feature type="modified residue" description="N5-methylglutamine" evidence="1">
    <location>
        <position position="150"/>
    </location>
</feature>
<dbReference type="EMBL" id="CU928164">
    <property type="protein sequence ID" value="CAR19928.1"/>
    <property type="molecule type" value="Genomic_DNA"/>
</dbReference>
<dbReference type="RefSeq" id="WP_000579833.1">
    <property type="nucleotide sequence ID" value="NC_011750.1"/>
</dbReference>
<dbReference type="RefSeq" id="YP_002409711.1">
    <property type="nucleotide sequence ID" value="NC_011750.1"/>
</dbReference>
<dbReference type="SMR" id="B7NLN9"/>
<dbReference type="STRING" id="585057.ECIAI39_3814"/>
<dbReference type="GeneID" id="86948184"/>
<dbReference type="KEGG" id="ect:ECIAI39_3814"/>
<dbReference type="PATRIC" id="fig|585057.6.peg.3951"/>
<dbReference type="HOGENOM" id="CLU_044142_4_1_6"/>
<dbReference type="Proteomes" id="UP000000749">
    <property type="component" value="Chromosome"/>
</dbReference>
<dbReference type="GO" id="GO:0022625">
    <property type="term" value="C:cytosolic large ribosomal subunit"/>
    <property type="evidence" value="ECO:0007669"/>
    <property type="project" value="TreeGrafter"/>
</dbReference>
<dbReference type="GO" id="GO:0019843">
    <property type="term" value="F:rRNA binding"/>
    <property type="evidence" value="ECO:0007669"/>
    <property type="project" value="UniProtKB-UniRule"/>
</dbReference>
<dbReference type="GO" id="GO:0003735">
    <property type="term" value="F:structural constituent of ribosome"/>
    <property type="evidence" value="ECO:0007669"/>
    <property type="project" value="InterPro"/>
</dbReference>
<dbReference type="GO" id="GO:0006412">
    <property type="term" value="P:translation"/>
    <property type="evidence" value="ECO:0007669"/>
    <property type="project" value="UniProtKB-UniRule"/>
</dbReference>
<dbReference type="FunFam" id="2.40.30.10:FF:000004">
    <property type="entry name" value="50S ribosomal protein L3"/>
    <property type="match status" value="1"/>
</dbReference>
<dbReference type="FunFam" id="3.30.160.810:FF:000001">
    <property type="entry name" value="50S ribosomal protein L3"/>
    <property type="match status" value="1"/>
</dbReference>
<dbReference type="Gene3D" id="3.30.160.810">
    <property type="match status" value="1"/>
</dbReference>
<dbReference type="Gene3D" id="2.40.30.10">
    <property type="entry name" value="Translation factors"/>
    <property type="match status" value="1"/>
</dbReference>
<dbReference type="HAMAP" id="MF_01325_B">
    <property type="entry name" value="Ribosomal_uL3_B"/>
    <property type="match status" value="1"/>
</dbReference>
<dbReference type="InterPro" id="IPR000597">
    <property type="entry name" value="Ribosomal_uL3"/>
</dbReference>
<dbReference type="InterPro" id="IPR019927">
    <property type="entry name" value="Ribosomal_uL3_bac/org-type"/>
</dbReference>
<dbReference type="InterPro" id="IPR019926">
    <property type="entry name" value="Ribosomal_uL3_CS"/>
</dbReference>
<dbReference type="InterPro" id="IPR009000">
    <property type="entry name" value="Transl_B-barrel_sf"/>
</dbReference>
<dbReference type="NCBIfam" id="TIGR03625">
    <property type="entry name" value="L3_bact"/>
    <property type="match status" value="1"/>
</dbReference>
<dbReference type="PANTHER" id="PTHR11229">
    <property type="entry name" value="50S RIBOSOMAL PROTEIN L3"/>
    <property type="match status" value="1"/>
</dbReference>
<dbReference type="PANTHER" id="PTHR11229:SF16">
    <property type="entry name" value="LARGE RIBOSOMAL SUBUNIT PROTEIN UL3C"/>
    <property type="match status" value="1"/>
</dbReference>
<dbReference type="Pfam" id="PF00297">
    <property type="entry name" value="Ribosomal_L3"/>
    <property type="match status" value="1"/>
</dbReference>
<dbReference type="SUPFAM" id="SSF50447">
    <property type="entry name" value="Translation proteins"/>
    <property type="match status" value="1"/>
</dbReference>
<dbReference type="PROSITE" id="PS00474">
    <property type="entry name" value="RIBOSOMAL_L3"/>
    <property type="match status" value="1"/>
</dbReference>
<keyword id="KW-0488">Methylation</keyword>
<keyword id="KW-0687">Ribonucleoprotein</keyword>
<keyword id="KW-0689">Ribosomal protein</keyword>
<keyword id="KW-0694">RNA-binding</keyword>
<keyword id="KW-0699">rRNA-binding</keyword>
<gene>
    <name evidence="1" type="primary">rplC</name>
    <name type="ordered locus">ECIAI39_3814</name>
</gene>
<proteinExistence type="inferred from homology"/>
<sequence length="209" mass="22244">MIGLVGKKVGMTRIFTEDGVSIPVTVIEVEANRVTQVKDLANDGYRAIQVTTGAKKANRVTKPEAGHFAKAGVEAGRGLWEFRLAEGEEFTVGQSISVELFADVKKVDVTGTSKGKGFAGTVKRWNFRTQDATHGNSLSHRVPGSIGQNQTPGKVFKGKKMAGQMGNERVTVQSLDVVRVDAERNLLLVKGAVPGATGSDLIVKPAVKA</sequence>
<organism>
    <name type="scientific">Escherichia coli O7:K1 (strain IAI39 / ExPEC)</name>
    <dbReference type="NCBI Taxonomy" id="585057"/>
    <lineage>
        <taxon>Bacteria</taxon>
        <taxon>Pseudomonadati</taxon>
        <taxon>Pseudomonadota</taxon>
        <taxon>Gammaproteobacteria</taxon>
        <taxon>Enterobacterales</taxon>
        <taxon>Enterobacteriaceae</taxon>
        <taxon>Escherichia</taxon>
    </lineage>
</organism>
<accession>B7NLN9</accession>
<reference key="1">
    <citation type="journal article" date="2009" name="PLoS Genet.">
        <title>Organised genome dynamics in the Escherichia coli species results in highly diverse adaptive paths.</title>
        <authorList>
            <person name="Touchon M."/>
            <person name="Hoede C."/>
            <person name="Tenaillon O."/>
            <person name="Barbe V."/>
            <person name="Baeriswyl S."/>
            <person name="Bidet P."/>
            <person name="Bingen E."/>
            <person name="Bonacorsi S."/>
            <person name="Bouchier C."/>
            <person name="Bouvet O."/>
            <person name="Calteau A."/>
            <person name="Chiapello H."/>
            <person name="Clermont O."/>
            <person name="Cruveiller S."/>
            <person name="Danchin A."/>
            <person name="Diard M."/>
            <person name="Dossat C."/>
            <person name="Karoui M.E."/>
            <person name="Frapy E."/>
            <person name="Garry L."/>
            <person name="Ghigo J.M."/>
            <person name="Gilles A.M."/>
            <person name="Johnson J."/>
            <person name="Le Bouguenec C."/>
            <person name="Lescat M."/>
            <person name="Mangenot S."/>
            <person name="Martinez-Jehanne V."/>
            <person name="Matic I."/>
            <person name="Nassif X."/>
            <person name="Oztas S."/>
            <person name="Petit M.A."/>
            <person name="Pichon C."/>
            <person name="Rouy Z."/>
            <person name="Ruf C.S."/>
            <person name="Schneider D."/>
            <person name="Tourret J."/>
            <person name="Vacherie B."/>
            <person name="Vallenet D."/>
            <person name="Medigue C."/>
            <person name="Rocha E.P.C."/>
            <person name="Denamur E."/>
        </authorList>
    </citation>
    <scope>NUCLEOTIDE SEQUENCE [LARGE SCALE GENOMIC DNA]</scope>
    <source>
        <strain>IAI39 / ExPEC</strain>
    </source>
</reference>
<name>RL3_ECO7I</name>
<comment type="function">
    <text evidence="1">One of the primary rRNA binding proteins, it binds directly near the 3'-end of the 23S rRNA, where it nucleates assembly of the 50S subunit.</text>
</comment>
<comment type="subunit">
    <text evidence="1">Part of the 50S ribosomal subunit. Forms a cluster with proteins L14 and L19.</text>
</comment>
<comment type="PTM">
    <text evidence="1">Methylated by PrmB.</text>
</comment>
<comment type="similarity">
    <text evidence="1">Belongs to the universal ribosomal protein uL3 family.</text>
</comment>
<evidence type="ECO:0000255" key="1">
    <source>
        <dbReference type="HAMAP-Rule" id="MF_01325"/>
    </source>
</evidence>
<evidence type="ECO:0000305" key="2"/>